<evidence type="ECO:0000255" key="1">
    <source>
        <dbReference type="HAMAP-Rule" id="MF_00249"/>
    </source>
</evidence>
<feature type="chain" id="PRO_0000160544" description="ATP-dependent protease ATPase subunit HslU">
    <location>
        <begin position="1"/>
        <end position="440"/>
    </location>
</feature>
<feature type="binding site" evidence="1">
    <location>
        <position position="18"/>
    </location>
    <ligand>
        <name>ATP</name>
        <dbReference type="ChEBI" id="CHEBI:30616"/>
    </ligand>
</feature>
<feature type="binding site" evidence="1">
    <location>
        <begin position="60"/>
        <end position="65"/>
    </location>
    <ligand>
        <name>ATP</name>
        <dbReference type="ChEBI" id="CHEBI:30616"/>
    </ligand>
</feature>
<feature type="binding site" evidence="1">
    <location>
        <position position="253"/>
    </location>
    <ligand>
        <name>ATP</name>
        <dbReference type="ChEBI" id="CHEBI:30616"/>
    </ligand>
</feature>
<feature type="binding site" evidence="1">
    <location>
        <position position="318"/>
    </location>
    <ligand>
        <name>ATP</name>
        <dbReference type="ChEBI" id="CHEBI:30616"/>
    </ligand>
</feature>
<feature type="binding site" evidence="1">
    <location>
        <position position="390"/>
    </location>
    <ligand>
        <name>ATP</name>
        <dbReference type="ChEBI" id="CHEBI:30616"/>
    </ligand>
</feature>
<gene>
    <name evidence="1" type="primary">hslU</name>
    <name type="ordered locus">SO_4163</name>
</gene>
<sequence>MSEMTPREIVHELDAHIIGQKKAKRSVAVALRNRWRRMQLDADFRQEVTPKNILMIGPTGVGKTEIARRLAKLANAPFIKVEATKFTEVGYVGKEVEQIIRDLTDIAIKLTREQQMGKCRQRAEEHAEERILDALLPKPKNDWDDSDSNSNTRQIFRKKLRESQLDDKEIDIDVAQPQIGIEIMSPPGMEEMTNQLQSLFKNMGQAPAKRRKMKIKEAFKLLIEEEAAKLVNQEDLKEQAIELVEQNGIVFLDEIDKICKRGETSGPDVSREGVQRDLLPLVEGCTVTTKHGMVKTDHILFIASGAFQMSKPSDLIPELQGRLPIRVELDALTADDFKRILTEPHASLTEQYIALMATEGVIIEFTESGIESIAKAAWQVNERTENIGARRLHTVMEKLMEDISYEASDKSGSSFVIDADYVSAHLDNLVQDEDLSRFIL</sequence>
<dbReference type="EMBL" id="AE014299">
    <property type="protein sequence ID" value="AAN57136.1"/>
    <property type="molecule type" value="Genomic_DNA"/>
</dbReference>
<dbReference type="RefSeq" id="NP_719692.1">
    <property type="nucleotide sequence ID" value="NC_004347.2"/>
</dbReference>
<dbReference type="RefSeq" id="WP_011073857.1">
    <property type="nucleotide sequence ID" value="NC_004347.2"/>
</dbReference>
<dbReference type="SMR" id="Q8E9U9"/>
<dbReference type="STRING" id="211586.SO_4163"/>
<dbReference type="PaxDb" id="211586-SO_4163"/>
<dbReference type="KEGG" id="son:SO_4163"/>
<dbReference type="PATRIC" id="fig|211586.12.peg.4022"/>
<dbReference type="eggNOG" id="COG1220">
    <property type="taxonomic scope" value="Bacteria"/>
</dbReference>
<dbReference type="HOGENOM" id="CLU_033123_0_0_6"/>
<dbReference type="OrthoDB" id="9804062at2"/>
<dbReference type="PhylomeDB" id="Q8E9U9"/>
<dbReference type="BioCyc" id="SONE211586:G1GMP-3842-MONOMER"/>
<dbReference type="Proteomes" id="UP000008186">
    <property type="component" value="Chromosome"/>
</dbReference>
<dbReference type="GO" id="GO:0009376">
    <property type="term" value="C:HslUV protease complex"/>
    <property type="evidence" value="ECO:0000318"/>
    <property type="project" value="GO_Central"/>
</dbReference>
<dbReference type="GO" id="GO:0005524">
    <property type="term" value="F:ATP binding"/>
    <property type="evidence" value="ECO:0000318"/>
    <property type="project" value="GO_Central"/>
</dbReference>
<dbReference type="GO" id="GO:0016887">
    <property type="term" value="F:ATP hydrolysis activity"/>
    <property type="evidence" value="ECO:0000318"/>
    <property type="project" value="GO_Central"/>
</dbReference>
<dbReference type="GO" id="GO:0008233">
    <property type="term" value="F:peptidase activity"/>
    <property type="evidence" value="ECO:0007669"/>
    <property type="project" value="InterPro"/>
</dbReference>
<dbReference type="GO" id="GO:0036402">
    <property type="term" value="F:proteasome-activating activity"/>
    <property type="evidence" value="ECO:0007669"/>
    <property type="project" value="UniProtKB-UniRule"/>
</dbReference>
<dbReference type="GO" id="GO:0043335">
    <property type="term" value="P:protein unfolding"/>
    <property type="evidence" value="ECO:0007669"/>
    <property type="project" value="UniProtKB-UniRule"/>
</dbReference>
<dbReference type="GO" id="GO:0051603">
    <property type="term" value="P:proteolysis involved in protein catabolic process"/>
    <property type="evidence" value="ECO:0000318"/>
    <property type="project" value="GO_Central"/>
</dbReference>
<dbReference type="CDD" id="cd19498">
    <property type="entry name" value="RecA-like_HslU"/>
    <property type="match status" value="1"/>
</dbReference>
<dbReference type="FunFam" id="1.10.8.10:FF:000028">
    <property type="entry name" value="ATP-dependent protease ATPase subunit HslU"/>
    <property type="match status" value="1"/>
</dbReference>
<dbReference type="FunFam" id="1.10.8.60:FF:000027">
    <property type="entry name" value="ATP-dependent protease ATPase subunit HslU"/>
    <property type="match status" value="1"/>
</dbReference>
<dbReference type="FunFam" id="3.40.50.300:FF:000213">
    <property type="entry name" value="ATP-dependent protease ATPase subunit HslU"/>
    <property type="match status" value="1"/>
</dbReference>
<dbReference type="FunFam" id="3.40.50.300:FF:000220">
    <property type="entry name" value="ATP-dependent protease ATPase subunit HslU"/>
    <property type="match status" value="1"/>
</dbReference>
<dbReference type="Gene3D" id="1.10.8.60">
    <property type="match status" value="1"/>
</dbReference>
<dbReference type="Gene3D" id="1.10.8.10">
    <property type="entry name" value="DNA helicase RuvA subunit, C-terminal domain"/>
    <property type="match status" value="1"/>
</dbReference>
<dbReference type="Gene3D" id="3.40.50.300">
    <property type="entry name" value="P-loop containing nucleotide triphosphate hydrolases"/>
    <property type="match status" value="2"/>
</dbReference>
<dbReference type="HAMAP" id="MF_00249">
    <property type="entry name" value="HslU"/>
    <property type="match status" value="1"/>
</dbReference>
<dbReference type="InterPro" id="IPR003593">
    <property type="entry name" value="AAA+_ATPase"/>
</dbReference>
<dbReference type="InterPro" id="IPR050052">
    <property type="entry name" value="ATP-dep_Clp_protease_ClpX"/>
</dbReference>
<dbReference type="InterPro" id="IPR003959">
    <property type="entry name" value="ATPase_AAA_core"/>
</dbReference>
<dbReference type="InterPro" id="IPR019489">
    <property type="entry name" value="Clp_ATPase_C"/>
</dbReference>
<dbReference type="InterPro" id="IPR004491">
    <property type="entry name" value="HslU"/>
</dbReference>
<dbReference type="InterPro" id="IPR027417">
    <property type="entry name" value="P-loop_NTPase"/>
</dbReference>
<dbReference type="NCBIfam" id="TIGR00390">
    <property type="entry name" value="hslU"/>
    <property type="match status" value="1"/>
</dbReference>
<dbReference type="NCBIfam" id="NF003544">
    <property type="entry name" value="PRK05201.1"/>
    <property type="match status" value="1"/>
</dbReference>
<dbReference type="PANTHER" id="PTHR48102">
    <property type="entry name" value="ATP-DEPENDENT CLP PROTEASE ATP-BINDING SUBUNIT CLPX-LIKE, MITOCHONDRIAL-RELATED"/>
    <property type="match status" value="1"/>
</dbReference>
<dbReference type="PANTHER" id="PTHR48102:SF3">
    <property type="entry name" value="ATP-DEPENDENT PROTEASE ATPASE SUBUNIT HSLU"/>
    <property type="match status" value="1"/>
</dbReference>
<dbReference type="Pfam" id="PF00004">
    <property type="entry name" value="AAA"/>
    <property type="match status" value="1"/>
</dbReference>
<dbReference type="Pfam" id="PF07724">
    <property type="entry name" value="AAA_2"/>
    <property type="match status" value="1"/>
</dbReference>
<dbReference type="SMART" id="SM00382">
    <property type="entry name" value="AAA"/>
    <property type="match status" value="1"/>
</dbReference>
<dbReference type="SMART" id="SM01086">
    <property type="entry name" value="ClpB_D2-small"/>
    <property type="match status" value="1"/>
</dbReference>
<dbReference type="SUPFAM" id="SSF52540">
    <property type="entry name" value="P-loop containing nucleoside triphosphate hydrolases"/>
    <property type="match status" value="1"/>
</dbReference>
<accession>Q8E9U9</accession>
<proteinExistence type="inferred from homology"/>
<organism>
    <name type="scientific">Shewanella oneidensis (strain ATCC 700550 / JCM 31522 / CIP 106686 / LMG 19005 / NCIMB 14063 / MR-1)</name>
    <dbReference type="NCBI Taxonomy" id="211586"/>
    <lineage>
        <taxon>Bacteria</taxon>
        <taxon>Pseudomonadati</taxon>
        <taxon>Pseudomonadota</taxon>
        <taxon>Gammaproteobacteria</taxon>
        <taxon>Alteromonadales</taxon>
        <taxon>Shewanellaceae</taxon>
        <taxon>Shewanella</taxon>
    </lineage>
</organism>
<keyword id="KW-0067">ATP-binding</keyword>
<keyword id="KW-0143">Chaperone</keyword>
<keyword id="KW-0963">Cytoplasm</keyword>
<keyword id="KW-0547">Nucleotide-binding</keyword>
<keyword id="KW-1185">Reference proteome</keyword>
<protein>
    <recommendedName>
        <fullName evidence="1">ATP-dependent protease ATPase subunit HslU</fullName>
    </recommendedName>
    <alternativeName>
        <fullName evidence="1">Unfoldase HslU</fullName>
    </alternativeName>
</protein>
<comment type="function">
    <text evidence="1">ATPase subunit of a proteasome-like degradation complex; this subunit has chaperone activity. The binding of ATP and its subsequent hydrolysis by HslU are essential for unfolding of protein substrates subsequently hydrolyzed by HslV. HslU recognizes the N-terminal part of its protein substrates and unfolds these before they are guided to HslV for hydrolysis.</text>
</comment>
<comment type="subunit">
    <text evidence="1">A double ring-shaped homohexamer of HslV is capped on each side by a ring-shaped HslU homohexamer. The assembly of the HslU/HslV complex is dependent on binding of ATP.</text>
</comment>
<comment type="subcellular location">
    <subcellularLocation>
        <location evidence="1">Cytoplasm</location>
    </subcellularLocation>
</comment>
<comment type="similarity">
    <text evidence="1">Belongs to the ClpX chaperone family. HslU subfamily.</text>
</comment>
<name>HSLU_SHEON</name>
<reference key="1">
    <citation type="journal article" date="2002" name="Nat. Biotechnol.">
        <title>Genome sequence of the dissimilatory metal ion-reducing bacterium Shewanella oneidensis.</title>
        <authorList>
            <person name="Heidelberg J.F."/>
            <person name="Paulsen I.T."/>
            <person name="Nelson K.E."/>
            <person name="Gaidos E.J."/>
            <person name="Nelson W.C."/>
            <person name="Read T.D."/>
            <person name="Eisen J.A."/>
            <person name="Seshadri R."/>
            <person name="Ward N.L."/>
            <person name="Methe B.A."/>
            <person name="Clayton R.A."/>
            <person name="Meyer T."/>
            <person name="Tsapin A."/>
            <person name="Scott J."/>
            <person name="Beanan M.J."/>
            <person name="Brinkac L.M."/>
            <person name="Daugherty S.C."/>
            <person name="DeBoy R.T."/>
            <person name="Dodson R.J."/>
            <person name="Durkin A.S."/>
            <person name="Haft D.H."/>
            <person name="Kolonay J.F."/>
            <person name="Madupu R."/>
            <person name="Peterson J.D."/>
            <person name="Umayam L.A."/>
            <person name="White O."/>
            <person name="Wolf A.M."/>
            <person name="Vamathevan J.J."/>
            <person name="Weidman J.F."/>
            <person name="Impraim M."/>
            <person name="Lee K."/>
            <person name="Berry K.J."/>
            <person name="Lee C."/>
            <person name="Mueller J."/>
            <person name="Khouri H.M."/>
            <person name="Gill J."/>
            <person name="Utterback T.R."/>
            <person name="McDonald L.A."/>
            <person name="Feldblyum T.V."/>
            <person name="Smith H.O."/>
            <person name="Venter J.C."/>
            <person name="Nealson K.H."/>
            <person name="Fraser C.M."/>
        </authorList>
    </citation>
    <scope>NUCLEOTIDE SEQUENCE [LARGE SCALE GENOMIC DNA]</scope>
    <source>
        <strain>ATCC 700550 / JCM 31522 / CIP 106686 / LMG 19005 / NCIMB 14063 / MR-1</strain>
    </source>
</reference>